<dbReference type="EMBL" id="AE017262">
    <property type="protein sequence ID" value="AAT04297.1"/>
    <property type="molecule type" value="Genomic_DNA"/>
</dbReference>
<dbReference type="SMR" id="Q71ZG7"/>
<dbReference type="KEGG" id="lmf:LMOf2365_1522"/>
<dbReference type="HOGENOM" id="CLU_162466_0_0_9"/>
<dbReference type="HAMAP" id="MF_01507">
    <property type="entry name" value="UPF0297"/>
    <property type="match status" value="1"/>
</dbReference>
<dbReference type="InterPro" id="IPR009309">
    <property type="entry name" value="IreB"/>
</dbReference>
<dbReference type="NCBIfam" id="NF003997">
    <property type="entry name" value="PRK05473.1"/>
    <property type="match status" value="1"/>
</dbReference>
<dbReference type="PANTHER" id="PTHR40067">
    <property type="entry name" value="UPF0297 PROTEIN YRZL"/>
    <property type="match status" value="1"/>
</dbReference>
<dbReference type="PANTHER" id="PTHR40067:SF1">
    <property type="entry name" value="UPF0297 PROTEIN YRZL"/>
    <property type="match status" value="1"/>
</dbReference>
<dbReference type="Pfam" id="PF06135">
    <property type="entry name" value="IreB"/>
    <property type="match status" value="1"/>
</dbReference>
<dbReference type="PIRSF" id="PIRSF037258">
    <property type="entry name" value="DUF965_bac"/>
    <property type="match status" value="1"/>
</dbReference>
<protein>
    <recommendedName>
        <fullName evidence="1">UPF0297 protein LMOf2365_1522</fullName>
    </recommendedName>
</protein>
<organism>
    <name type="scientific">Listeria monocytogenes serotype 4b (strain F2365)</name>
    <dbReference type="NCBI Taxonomy" id="265669"/>
    <lineage>
        <taxon>Bacteria</taxon>
        <taxon>Bacillati</taxon>
        <taxon>Bacillota</taxon>
        <taxon>Bacilli</taxon>
        <taxon>Bacillales</taxon>
        <taxon>Listeriaceae</taxon>
        <taxon>Listeria</taxon>
    </lineage>
</organism>
<reference key="1">
    <citation type="journal article" date="2004" name="Nucleic Acids Res.">
        <title>Whole genome comparisons of serotype 4b and 1/2a strains of the food-borne pathogen Listeria monocytogenes reveal new insights into the core genome components of this species.</title>
        <authorList>
            <person name="Nelson K.E."/>
            <person name="Fouts D.E."/>
            <person name="Mongodin E.F."/>
            <person name="Ravel J."/>
            <person name="DeBoy R.T."/>
            <person name="Kolonay J.F."/>
            <person name="Rasko D.A."/>
            <person name="Angiuoli S.V."/>
            <person name="Gill S.R."/>
            <person name="Paulsen I.T."/>
            <person name="Peterson J.D."/>
            <person name="White O."/>
            <person name="Nelson W.C."/>
            <person name="Nierman W.C."/>
            <person name="Beanan M.J."/>
            <person name="Brinkac L.M."/>
            <person name="Daugherty S.C."/>
            <person name="Dodson R.J."/>
            <person name="Durkin A.S."/>
            <person name="Madupu R."/>
            <person name="Haft D.H."/>
            <person name="Selengut J."/>
            <person name="Van Aken S.E."/>
            <person name="Khouri H.M."/>
            <person name="Fedorova N."/>
            <person name="Forberger H.A."/>
            <person name="Tran B."/>
            <person name="Kathariou S."/>
            <person name="Wonderling L.D."/>
            <person name="Uhlich G.A."/>
            <person name="Bayles D.O."/>
            <person name="Luchansky J.B."/>
            <person name="Fraser C.M."/>
        </authorList>
    </citation>
    <scope>NUCLEOTIDE SEQUENCE [LARGE SCALE GENOMIC DNA]</scope>
    <source>
        <strain>F2365</strain>
    </source>
</reference>
<sequence>MDSKDQTMFYNFGDDSIEEDVKKLMKQVYVALEEKGYNPVNQIVGYLLSGDPAYIPRHKDARSMIRRLERDEIIEELVKAYLKNNEIGEK</sequence>
<accession>Q71ZG7</accession>
<gene>
    <name type="ordered locus">LMOf2365_1522</name>
</gene>
<comment type="similarity">
    <text evidence="1">Belongs to the UPF0297 family.</text>
</comment>
<evidence type="ECO:0000255" key="1">
    <source>
        <dbReference type="HAMAP-Rule" id="MF_01507"/>
    </source>
</evidence>
<proteinExistence type="inferred from homology"/>
<feature type="chain" id="PRO_0000216975" description="UPF0297 protein LMOf2365_1522">
    <location>
        <begin position="1"/>
        <end position="90"/>
    </location>
</feature>
<name>Y1522_LISMF</name>